<accession>A0K322</accession>
<gene>
    <name evidence="1" type="primary">gcvH</name>
    <name type="ordered locus">Bcen2424_0145</name>
</gene>
<sequence length="126" mass="13226">MSNVPADLKYTDEHEWIRTEADGTLTVGITDHAQSTLGDIVFLELPEVGKSVNAGDAVGVVESVKAASDIYSPVSGEVVAVNEAATDAPEEVNGDAYGVWLFKIKLAAGASTDKLIDADAYSKLID</sequence>
<feature type="chain" id="PRO_0000302361" description="Glycine cleavage system H protein">
    <location>
        <begin position="1"/>
        <end position="126"/>
    </location>
</feature>
<feature type="domain" description="Lipoyl-binding" evidence="2">
    <location>
        <begin position="24"/>
        <end position="105"/>
    </location>
</feature>
<feature type="modified residue" description="N6-lipoyllysine" evidence="1">
    <location>
        <position position="65"/>
    </location>
</feature>
<organism>
    <name type="scientific">Burkholderia cenocepacia (strain HI2424)</name>
    <dbReference type="NCBI Taxonomy" id="331272"/>
    <lineage>
        <taxon>Bacteria</taxon>
        <taxon>Pseudomonadati</taxon>
        <taxon>Pseudomonadota</taxon>
        <taxon>Betaproteobacteria</taxon>
        <taxon>Burkholderiales</taxon>
        <taxon>Burkholderiaceae</taxon>
        <taxon>Burkholderia</taxon>
        <taxon>Burkholderia cepacia complex</taxon>
    </lineage>
</organism>
<comment type="function">
    <text evidence="1">The glycine cleavage system catalyzes the degradation of glycine. The H protein shuttles the methylamine group of glycine from the P protein to the T protein.</text>
</comment>
<comment type="cofactor">
    <cofactor evidence="1">
        <name>(R)-lipoate</name>
        <dbReference type="ChEBI" id="CHEBI:83088"/>
    </cofactor>
    <text evidence="1">Binds 1 lipoyl cofactor covalently.</text>
</comment>
<comment type="subunit">
    <text evidence="1">The glycine cleavage system is composed of four proteins: P, T, L and H.</text>
</comment>
<comment type="similarity">
    <text evidence="1">Belongs to the GcvH family.</text>
</comment>
<keyword id="KW-0450">Lipoyl</keyword>
<evidence type="ECO:0000255" key="1">
    <source>
        <dbReference type="HAMAP-Rule" id="MF_00272"/>
    </source>
</evidence>
<evidence type="ECO:0000255" key="2">
    <source>
        <dbReference type="PROSITE-ProRule" id="PRU01066"/>
    </source>
</evidence>
<proteinExistence type="inferred from homology"/>
<protein>
    <recommendedName>
        <fullName evidence="1">Glycine cleavage system H protein</fullName>
    </recommendedName>
</protein>
<reference key="1">
    <citation type="submission" date="2006-08" db="EMBL/GenBank/DDBJ databases">
        <title>Complete sequence of chromosome 1 of Burkholderia cenocepacia HI2424.</title>
        <authorList>
            <person name="Copeland A."/>
            <person name="Lucas S."/>
            <person name="Lapidus A."/>
            <person name="Barry K."/>
            <person name="Detter J.C."/>
            <person name="Glavina del Rio T."/>
            <person name="Hammon N."/>
            <person name="Israni S."/>
            <person name="Pitluck S."/>
            <person name="Chain P."/>
            <person name="Malfatti S."/>
            <person name="Shin M."/>
            <person name="Vergez L."/>
            <person name="Schmutz J."/>
            <person name="Larimer F."/>
            <person name="Land M."/>
            <person name="Hauser L."/>
            <person name="Kyrpides N."/>
            <person name="Kim E."/>
            <person name="LiPuma J.J."/>
            <person name="Gonzalez C.F."/>
            <person name="Konstantinidis K."/>
            <person name="Tiedje J.M."/>
            <person name="Richardson P."/>
        </authorList>
    </citation>
    <scope>NUCLEOTIDE SEQUENCE [LARGE SCALE GENOMIC DNA]</scope>
    <source>
        <strain>HI2424</strain>
    </source>
</reference>
<dbReference type="EMBL" id="CP000458">
    <property type="protein sequence ID" value="ABK06899.1"/>
    <property type="molecule type" value="Genomic_DNA"/>
</dbReference>
<dbReference type="RefSeq" id="WP_011546763.1">
    <property type="nucleotide sequence ID" value="NC_008542.1"/>
</dbReference>
<dbReference type="SMR" id="A0K322"/>
<dbReference type="KEGG" id="bch:Bcen2424_0145"/>
<dbReference type="HOGENOM" id="CLU_097408_2_1_4"/>
<dbReference type="GO" id="GO:0005829">
    <property type="term" value="C:cytosol"/>
    <property type="evidence" value="ECO:0007669"/>
    <property type="project" value="TreeGrafter"/>
</dbReference>
<dbReference type="GO" id="GO:0005960">
    <property type="term" value="C:glycine cleavage complex"/>
    <property type="evidence" value="ECO:0007669"/>
    <property type="project" value="InterPro"/>
</dbReference>
<dbReference type="GO" id="GO:0019464">
    <property type="term" value="P:glycine decarboxylation via glycine cleavage system"/>
    <property type="evidence" value="ECO:0007669"/>
    <property type="project" value="UniProtKB-UniRule"/>
</dbReference>
<dbReference type="CDD" id="cd06848">
    <property type="entry name" value="GCS_H"/>
    <property type="match status" value="1"/>
</dbReference>
<dbReference type="Gene3D" id="2.40.50.100">
    <property type="match status" value="1"/>
</dbReference>
<dbReference type="HAMAP" id="MF_00272">
    <property type="entry name" value="GcvH"/>
    <property type="match status" value="1"/>
</dbReference>
<dbReference type="InterPro" id="IPR003016">
    <property type="entry name" value="2-oxoA_DH_lipoyl-BS"/>
</dbReference>
<dbReference type="InterPro" id="IPR000089">
    <property type="entry name" value="Biotin_lipoyl"/>
</dbReference>
<dbReference type="InterPro" id="IPR002930">
    <property type="entry name" value="GCV_H"/>
</dbReference>
<dbReference type="InterPro" id="IPR033753">
    <property type="entry name" value="GCV_H/Fam206"/>
</dbReference>
<dbReference type="InterPro" id="IPR017453">
    <property type="entry name" value="GCV_H_sub"/>
</dbReference>
<dbReference type="InterPro" id="IPR011053">
    <property type="entry name" value="Single_hybrid_motif"/>
</dbReference>
<dbReference type="NCBIfam" id="TIGR00527">
    <property type="entry name" value="gcvH"/>
    <property type="match status" value="1"/>
</dbReference>
<dbReference type="NCBIfam" id="NF002270">
    <property type="entry name" value="PRK01202.1"/>
    <property type="match status" value="1"/>
</dbReference>
<dbReference type="PANTHER" id="PTHR11715">
    <property type="entry name" value="GLYCINE CLEAVAGE SYSTEM H PROTEIN"/>
    <property type="match status" value="1"/>
</dbReference>
<dbReference type="PANTHER" id="PTHR11715:SF3">
    <property type="entry name" value="GLYCINE CLEAVAGE SYSTEM H PROTEIN-RELATED"/>
    <property type="match status" value="1"/>
</dbReference>
<dbReference type="Pfam" id="PF01597">
    <property type="entry name" value="GCV_H"/>
    <property type="match status" value="1"/>
</dbReference>
<dbReference type="SUPFAM" id="SSF51230">
    <property type="entry name" value="Single hybrid motif"/>
    <property type="match status" value="1"/>
</dbReference>
<dbReference type="PROSITE" id="PS50968">
    <property type="entry name" value="BIOTINYL_LIPOYL"/>
    <property type="match status" value="1"/>
</dbReference>
<dbReference type="PROSITE" id="PS00189">
    <property type="entry name" value="LIPOYL"/>
    <property type="match status" value="1"/>
</dbReference>
<name>GCSH_BURCH</name>